<gene>
    <name evidence="1" type="primary">cynS</name>
    <name type="ordered locus">BMA10229_A1245</name>
</gene>
<sequence length="156" mass="16958">MTQSQHSQSPREALAERIVEAKTRKNLTFEQINEGTGLSVAFTTAALLGQHPLPADAARVVAAKLDLDDDAQRLLQTIPVRGSIPGGVPTDPTIYRFYEIVQVYGSTLKALIHEQFGDGIVSAINFKLDIKKVDDPEGGSRAVITLDGKYLPTKPF</sequence>
<dbReference type="EC" id="4.2.1.104" evidence="1"/>
<dbReference type="EMBL" id="CP000546">
    <property type="protein sequence ID" value="ABN03253.1"/>
    <property type="molecule type" value="Genomic_DNA"/>
</dbReference>
<dbReference type="RefSeq" id="WP_004194284.1">
    <property type="nucleotide sequence ID" value="NC_008836.1"/>
</dbReference>
<dbReference type="SMR" id="A2S5L0"/>
<dbReference type="GeneID" id="93061548"/>
<dbReference type="KEGG" id="bml:BMA10229_A1245"/>
<dbReference type="HOGENOM" id="CLU_103452_1_1_4"/>
<dbReference type="Proteomes" id="UP000002283">
    <property type="component" value="Chromosome I"/>
</dbReference>
<dbReference type="GO" id="GO:0008824">
    <property type="term" value="F:cyanate hydratase activity"/>
    <property type="evidence" value="ECO:0007669"/>
    <property type="project" value="UniProtKB-UniRule"/>
</dbReference>
<dbReference type="GO" id="GO:0003677">
    <property type="term" value="F:DNA binding"/>
    <property type="evidence" value="ECO:0007669"/>
    <property type="project" value="InterPro"/>
</dbReference>
<dbReference type="GO" id="GO:0009439">
    <property type="term" value="P:cyanate metabolic process"/>
    <property type="evidence" value="ECO:0007669"/>
    <property type="project" value="UniProtKB-UniRule"/>
</dbReference>
<dbReference type="CDD" id="cd00559">
    <property type="entry name" value="Cyanase_C"/>
    <property type="match status" value="1"/>
</dbReference>
<dbReference type="Gene3D" id="3.30.1160.10">
    <property type="entry name" value="Cyanate lyase, C-terminal domain"/>
    <property type="match status" value="1"/>
</dbReference>
<dbReference type="Gene3D" id="1.10.260.40">
    <property type="entry name" value="lambda repressor-like DNA-binding domains"/>
    <property type="match status" value="1"/>
</dbReference>
<dbReference type="HAMAP" id="MF_00535">
    <property type="entry name" value="Cyanate_hydrat"/>
    <property type="match status" value="1"/>
</dbReference>
<dbReference type="InterPro" id="IPR008076">
    <property type="entry name" value="Cyanase"/>
</dbReference>
<dbReference type="InterPro" id="IPR003712">
    <property type="entry name" value="Cyanate_lyase_C"/>
</dbReference>
<dbReference type="InterPro" id="IPR036581">
    <property type="entry name" value="Cyanate_lyase_C_sf"/>
</dbReference>
<dbReference type="InterPro" id="IPR048564">
    <property type="entry name" value="CYNS_N"/>
</dbReference>
<dbReference type="InterPro" id="IPR010982">
    <property type="entry name" value="Lambda_DNA-bd_dom_sf"/>
</dbReference>
<dbReference type="NCBIfam" id="TIGR00673">
    <property type="entry name" value="cynS"/>
    <property type="match status" value="1"/>
</dbReference>
<dbReference type="NCBIfam" id="NF002773">
    <property type="entry name" value="PRK02866.1"/>
    <property type="match status" value="1"/>
</dbReference>
<dbReference type="PANTHER" id="PTHR34186">
    <property type="entry name" value="CYANATE HYDRATASE"/>
    <property type="match status" value="1"/>
</dbReference>
<dbReference type="PANTHER" id="PTHR34186:SF2">
    <property type="entry name" value="CYANATE HYDRATASE"/>
    <property type="match status" value="1"/>
</dbReference>
<dbReference type="Pfam" id="PF02560">
    <property type="entry name" value="Cyanate_lyase"/>
    <property type="match status" value="1"/>
</dbReference>
<dbReference type="Pfam" id="PF21291">
    <property type="entry name" value="CYNS_N"/>
    <property type="match status" value="1"/>
</dbReference>
<dbReference type="PIRSF" id="PIRSF001263">
    <property type="entry name" value="Cyanate_hydratas"/>
    <property type="match status" value="1"/>
</dbReference>
<dbReference type="PRINTS" id="PR01693">
    <property type="entry name" value="CYANASE"/>
</dbReference>
<dbReference type="SMART" id="SM01116">
    <property type="entry name" value="Cyanate_lyase"/>
    <property type="match status" value="1"/>
</dbReference>
<dbReference type="SUPFAM" id="SSF55234">
    <property type="entry name" value="Cyanase C-terminal domain"/>
    <property type="match status" value="1"/>
</dbReference>
<dbReference type="SUPFAM" id="SSF47413">
    <property type="entry name" value="lambda repressor-like DNA-binding domains"/>
    <property type="match status" value="1"/>
</dbReference>
<proteinExistence type="inferred from homology"/>
<keyword id="KW-0456">Lyase</keyword>
<accession>A2S5L0</accession>
<protein>
    <recommendedName>
        <fullName evidence="1">Cyanate hydratase</fullName>
        <shortName evidence="1">Cyanase</shortName>
        <ecNumber evidence="1">4.2.1.104</ecNumber>
    </recommendedName>
    <alternativeName>
        <fullName evidence="1">Cyanate hydrolase</fullName>
    </alternativeName>
    <alternativeName>
        <fullName evidence="1">Cyanate lyase</fullName>
    </alternativeName>
</protein>
<comment type="function">
    <text evidence="1">Catalyzes the reaction of cyanate with bicarbonate to produce ammonia and carbon dioxide.</text>
</comment>
<comment type="catalytic activity">
    <reaction evidence="1">
        <text>cyanate + hydrogencarbonate + 3 H(+) = NH4(+) + 2 CO2</text>
        <dbReference type="Rhea" id="RHEA:11120"/>
        <dbReference type="ChEBI" id="CHEBI:15378"/>
        <dbReference type="ChEBI" id="CHEBI:16526"/>
        <dbReference type="ChEBI" id="CHEBI:17544"/>
        <dbReference type="ChEBI" id="CHEBI:28938"/>
        <dbReference type="ChEBI" id="CHEBI:29195"/>
        <dbReference type="EC" id="4.2.1.104"/>
    </reaction>
</comment>
<comment type="similarity">
    <text evidence="1">Belongs to the cyanase family.</text>
</comment>
<feature type="chain" id="PRO_1000051468" description="Cyanate hydratase">
    <location>
        <begin position="1"/>
        <end position="156"/>
    </location>
</feature>
<feature type="active site" evidence="1">
    <location>
        <position position="96"/>
    </location>
</feature>
<feature type="active site" evidence="1">
    <location>
        <position position="99"/>
    </location>
</feature>
<feature type="active site" evidence="1">
    <location>
        <position position="122"/>
    </location>
</feature>
<evidence type="ECO:0000255" key="1">
    <source>
        <dbReference type="HAMAP-Rule" id="MF_00535"/>
    </source>
</evidence>
<organism>
    <name type="scientific">Burkholderia mallei (strain NCTC 10229)</name>
    <dbReference type="NCBI Taxonomy" id="412022"/>
    <lineage>
        <taxon>Bacteria</taxon>
        <taxon>Pseudomonadati</taxon>
        <taxon>Pseudomonadota</taxon>
        <taxon>Betaproteobacteria</taxon>
        <taxon>Burkholderiales</taxon>
        <taxon>Burkholderiaceae</taxon>
        <taxon>Burkholderia</taxon>
        <taxon>pseudomallei group</taxon>
    </lineage>
</organism>
<name>CYNS_BURM9</name>
<reference key="1">
    <citation type="journal article" date="2010" name="Genome Biol. Evol.">
        <title>Continuing evolution of Burkholderia mallei through genome reduction and large-scale rearrangements.</title>
        <authorList>
            <person name="Losada L."/>
            <person name="Ronning C.M."/>
            <person name="DeShazer D."/>
            <person name="Woods D."/>
            <person name="Fedorova N."/>
            <person name="Kim H.S."/>
            <person name="Shabalina S.A."/>
            <person name="Pearson T.R."/>
            <person name="Brinkac L."/>
            <person name="Tan P."/>
            <person name="Nandi T."/>
            <person name="Crabtree J."/>
            <person name="Badger J."/>
            <person name="Beckstrom-Sternberg S."/>
            <person name="Saqib M."/>
            <person name="Schutzer S.E."/>
            <person name="Keim P."/>
            <person name="Nierman W.C."/>
        </authorList>
    </citation>
    <scope>NUCLEOTIDE SEQUENCE [LARGE SCALE GENOMIC DNA]</scope>
    <source>
        <strain>NCTC 10229</strain>
    </source>
</reference>